<sequence>MSGCPFSGNSVGYTLKNLSMEDNEEDGAQTGVNRASKGGLIYGDYLQLEKILNAQELQSEIKGNKIHDEHLFIITHQAYELWFKQILWELDSVREIFQNGHVRDERNMLKVMTRMHRVVVIFKLLVQQFSVLETMTALDFNDFREYLSPASGFQSLQFRLLENKIGVLQSLRVPYNRKHYRDNFEGDYNELLLKSEQEQTLLQLVEAWLERTPGLEPHGFNFWGKFEKNILKGLEEEFLKIQAKKDSEEKEEQMAEFRKQKEVLLCLFDEKRHDYLLSKGERRLSYRALQGALMIYFYREEPRFQVPFQLLTSLMDIDTLMTKWRYNHVCMVHRMLGSKAGTGGSSGYYYLRSTVSDRYKVFVDLFNLSSYLVPRHWIPKMNPIIHKFLYTAEYSDSSYFSSDESD</sequence>
<reference key="1">
    <citation type="journal article" date="1990" name="Biochem. Biophys. Res. Commun.">
        <title>Deduced primary structure of rat tryptophan-2,3-dioxygenase.</title>
        <authorList>
            <person name="Maezono K."/>
            <person name="Tashiro K."/>
            <person name="Nakamura T."/>
        </authorList>
    </citation>
    <scope>NUCLEOTIDE SEQUENCE [MRNA]</scope>
    <source>
        <tissue>Liver</tissue>
    </source>
</reference>
<reference key="2">
    <citation type="journal article" date="2004" name="Genome Res.">
        <title>The status, quality, and expansion of the NIH full-length cDNA project: the Mammalian Gene Collection (MGC).</title>
        <authorList>
            <consortium name="The MGC Project Team"/>
        </authorList>
    </citation>
    <scope>NUCLEOTIDE SEQUENCE [LARGE SCALE MRNA]</scope>
    <source>
        <tissue>Liver</tissue>
    </source>
</reference>
<reference key="3">
    <citation type="journal article" date="1987" name="EMBO J.">
        <title>Glucocorticoid induction of the rat tryptophan oxygenase gene is mediated by two widely separated glucocorticoid-responsive elements.</title>
        <authorList>
            <person name="Danesch U."/>
            <person name="Gloss B."/>
            <person name="Schmid W."/>
            <person name="Schuetz G."/>
            <person name="Schuele R."/>
            <person name="Renkawitz R."/>
        </authorList>
    </citation>
    <scope>NUCLEOTIDE SEQUENCE [GENOMIC DNA] OF 1-12</scope>
    <scope>INDUCTION</scope>
</reference>
<reference key="4">
    <citation type="journal article" date="1982" name="EMBO J.">
        <title>Isolation and characterization of the rat tryptophan oxygenase gene.</title>
        <authorList>
            <person name="Schmid W."/>
            <person name="Scherer G."/>
            <person name="Danesch U."/>
            <person name="Zentgraf H."/>
            <person name="Matthias P."/>
            <person name="Strange C.M."/>
            <person name="Roewekamp W.G."/>
            <person name="Schuetz G."/>
        </authorList>
    </citation>
    <scope>NUCLEOTIDE SEQUENCE [GENOMIC DNA] OF 1-12</scope>
    <source>
        <tissue>Liver</tissue>
    </source>
</reference>
<reference key="5">
    <citation type="journal article" date="1992" name="Biochim. Biophys. Acta">
        <title>Nucleotide sequence of a fragment of the rat tryptophan oxygenase gene showing high affinity to glucocorticoid receptor in vitro.</title>
        <authorList>
            <person name="Merkulov V.M."/>
            <person name="Merkulova T.I."/>
        </authorList>
    </citation>
    <scope>NUCLEOTIDE SEQUENCE [GENOMIC DNA] OF 102-242</scope>
</reference>
<reference key="6">
    <citation type="journal article" date="2012" name="Nat. Commun.">
        <title>Quantitative maps of protein phosphorylation sites across 14 different rat organs and tissues.</title>
        <authorList>
            <person name="Lundby A."/>
            <person name="Secher A."/>
            <person name="Lage K."/>
            <person name="Nordsborg N.B."/>
            <person name="Dmytriyev A."/>
            <person name="Lundby C."/>
            <person name="Olsen J.V."/>
        </authorList>
    </citation>
    <scope>PHOSPHORYLATION [LARGE SCALE ANALYSIS] AT SER-19</scope>
    <scope>IDENTIFICATION BY MASS SPECTROMETRY [LARGE SCALE ANALYSIS]</scope>
</reference>
<gene>
    <name evidence="1" type="primary">Tdo2</name>
    <name type="synonym">Tdo</name>
</gene>
<accession>P21643</accession>
<accession>Q5EBC2</accession>
<accession>Q6LBW3</accession>
<comment type="function">
    <text evidence="1">Heme-dependent dioxygenase that catalyzes the oxidative cleavage of the L-tryptophan (L-Trp) pyrrole ring and converts L-tryptophan to N-formyl-L-kynurenine. Catalyzes the oxidative cleavage of the indole moiety.</text>
</comment>
<comment type="catalytic activity">
    <reaction evidence="1">
        <text>L-tryptophan + O2 = N-formyl-L-kynurenine</text>
        <dbReference type="Rhea" id="RHEA:24536"/>
        <dbReference type="ChEBI" id="CHEBI:15379"/>
        <dbReference type="ChEBI" id="CHEBI:57912"/>
        <dbReference type="ChEBI" id="CHEBI:58629"/>
        <dbReference type="EC" id="1.13.11.11"/>
    </reaction>
</comment>
<comment type="cofactor">
    <cofactor evidence="1">
        <name>heme</name>
        <dbReference type="ChEBI" id="CHEBI:30413"/>
    </cofactor>
    <text evidence="1">Binds 1 heme group per subunit.</text>
</comment>
<comment type="pathway">
    <text evidence="1">Amino-acid degradation; L-tryptophan degradation via kynurenine pathway; L-kynurenine from L-tryptophan: step 1/2.</text>
</comment>
<comment type="subunit">
    <text evidence="1">Homotetramer. Dimer of dimers.</text>
</comment>
<comment type="tissue specificity">
    <text>Liver.</text>
</comment>
<comment type="induction">
    <text evidence="2">By dexamethasone.</text>
</comment>
<comment type="similarity">
    <text evidence="1">Belongs to the tryptophan 2,3-dioxygenase family.</text>
</comment>
<name>T23O_RAT</name>
<dbReference type="EC" id="1.13.11.11" evidence="1"/>
<dbReference type="EMBL" id="M55167">
    <property type="protein sequence ID" value="AAA63503.1"/>
    <property type="molecule type" value="mRNA"/>
</dbReference>
<dbReference type="EMBL" id="BC089802">
    <property type="protein sequence ID" value="AAH89802.1"/>
    <property type="molecule type" value="mRNA"/>
</dbReference>
<dbReference type="EMBL" id="X05145">
    <property type="protein sequence ID" value="CAA28794.1"/>
    <property type="molecule type" value="Genomic_DNA"/>
</dbReference>
<dbReference type="EMBL" id="X01849">
    <property type="protein sequence ID" value="CAA25974.1"/>
    <property type="molecule type" value="Genomic_DNA"/>
</dbReference>
<dbReference type="EMBL" id="X60833">
    <property type="status" value="NOT_ANNOTATED_CDS"/>
    <property type="molecule type" value="Genomic_DNA"/>
</dbReference>
<dbReference type="PIR" id="A35484">
    <property type="entry name" value="A35484"/>
</dbReference>
<dbReference type="RefSeq" id="NP_071798.1">
    <property type="nucleotide sequence ID" value="NM_022403.2"/>
</dbReference>
<dbReference type="SMR" id="P21643"/>
<dbReference type="FunCoup" id="P21643">
    <property type="interactions" value="146"/>
</dbReference>
<dbReference type="IntAct" id="P21643">
    <property type="interactions" value="1"/>
</dbReference>
<dbReference type="STRING" id="10116.ENSRNOP00000015732"/>
<dbReference type="BindingDB" id="P21643"/>
<dbReference type="ChEMBL" id="CHEMBL2686"/>
<dbReference type="iPTMnet" id="P21643"/>
<dbReference type="PhosphoSitePlus" id="P21643"/>
<dbReference type="PaxDb" id="10116-ENSRNOP00000015732"/>
<dbReference type="Ensembl" id="ENSRNOT00000015732.4">
    <property type="protein sequence ID" value="ENSRNOP00000015732.1"/>
    <property type="gene ID" value="ENSRNOG00000011612.4"/>
</dbReference>
<dbReference type="GeneID" id="64206"/>
<dbReference type="KEGG" id="rno:64206"/>
<dbReference type="UCSC" id="RGD:68370">
    <property type="organism name" value="rat"/>
</dbReference>
<dbReference type="AGR" id="RGD:68370"/>
<dbReference type="CTD" id="6999"/>
<dbReference type="RGD" id="68370">
    <property type="gene designation" value="Tdo2"/>
</dbReference>
<dbReference type="eggNOG" id="KOG3906">
    <property type="taxonomic scope" value="Eukaryota"/>
</dbReference>
<dbReference type="GeneTree" id="ENSGT00390000008593"/>
<dbReference type="HOGENOM" id="CLU_045599_1_1_1"/>
<dbReference type="InParanoid" id="P21643"/>
<dbReference type="OMA" id="WRWRNDH"/>
<dbReference type="OrthoDB" id="447477at2759"/>
<dbReference type="PhylomeDB" id="P21643"/>
<dbReference type="TreeFam" id="TF105827"/>
<dbReference type="BRENDA" id="1.13.11.11">
    <property type="organism ID" value="5301"/>
</dbReference>
<dbReference type="BRENDA" id="1.13.11.52">
    <property type="organism ID" value="5301"/>
</dbReference>
<dbReference type="Reactome" id="R-RNO-71240">
    <property type="pathway name" value="Tryptophan catabolism"/>
</dbReference>
<dbReference type="SABIO-RK" id="P21643"/>
<dbReference type="UniPathway" id="UPA00333">
    <property type="reaction ID" value="UER00453"/>
</dbReference>
<dbReference type="PRO" id="PR:P21643"/>
<dbReference type="Proteomes" id="UP000002494">
    <property type="component" value="Chromosome 2"/>
</dbReference>
<dbReference type="Bgee" id="ENSRNOG00000011612">
    <property type="expression patterns" value="Expressed in liver and 10 other cell types or tissues"/>
</dbReference>
<dbReference type="GO" id="GO:0016597">
    <property type="term" value="F:amino acid binding"/>
    <property type="evidence" value="ECO:0000314"/>
    <property type="project" value="RGD"/>
</dbReference>
<dbReference type="GO" id="GO:0020037">
    <property type="term" value="F:heme binding"/>
    <property type="evidence" value="ECO:0000314"/>
    <property type="project" value="RGD"/>
</dbReference>
<dbReference type="GO" id="GO:0042802">
    <property type="term" value="F:identical protein binding"/>
    <property type="evidence" value="ECO:0000266"/>
    <property type="project" value="RGD"/>
</dbReference>
<dbReference type="GO" id="GO:0046872">
    <property type="term" value="F:metal ion binding"/>
    <property type="evidence" value="ECO:0007669"/>
    <property type="project" value="UniProtKB-KW"/>
</dbReference>
<dbReference type="GO" id="GO:0019825">
    <property type="term" value="F:oxygen binding"/>
    <property type="evidence" value="ECO:0000314"/>
    <property type="project" value="RGD"/>
</dbReference>
<dbReference type="GO" id="GO:0004833">
    <property type="term" value="F:tryptophan 2,3-dioxygenase activity"/>
    <property type="evidence" value="ECO:0000314"/>
    <property type="project" value="RGD"/>
</dbReference>
<dbReference type="GO" id="GO:0019442">
    <property type="term" value="P:L-tryptophan catabolic process to acetyl-CoA"/>
    <property type="evidence" value="ECO:0000314"/>
    <property type="project" value="RGD"/>
</dbReference>
<dbReference type="GO" id="GO:0019441">
    <property type="term" value="P:L-tryptophan catabolic process to kynurenine"/>
    <property type="evidence" value="ECO:0000250"/>
    <property type="project" value="UniProtKB"/>
</dbReference>
<dbReference type="GO" id="GO:0006568">
    <property type="term" value="P:L-tryptophan metabolic process"/>
    <property type="evidence" value="ECO:0000314"/>
    <property type="project" value="RGD"/>
</dbReference>
<dbReference type="GO" id="GO:0051289">
    <property type="term" value="P:protein homotetramerization"/>
    <property type="evidence" value="ECO:0000250"/>
    <property type="project" value="UniProtKB"/>
</dbReference>
<dbReference type="GO" id="GO:1904842">
    <property type="term" value="P:response to nitroglycerin"/>
    <property type="evidence" value="ECO:0000270"/>
    <property type="project" value="RGD"/>
</dbReference>
<dbReference type="FunFam" id="1.10.287.3810:FF:000001">
    <property type="entry name" value="Tryptophan 2,3-dioxygenase"/>
    <property type="match status" value="1"/>
</dbReference>
<dbReference type="Gene3D" id="1.10.287.3810">
    <property type="match status" value="1"/>
</dbReference>
<dbReference type="Gene3D" id="1.20.58.480">
    <property type="match status" value="1"/>
</dbReference>
<dbReference type="HAMAP" id="MF_01972">
    <property type="entry name" value="T23O"/>
    <property type="match status" value="1"/>
</dbReference>
<dbReference type="InterPro" id="IPR037217">
    <property type="entry name" value="Trp/Indoleamine_2_3_dOase-like"/>
</dbReference>
<dbReference type="InterPro" id="IPR004981">
    <property type="entry name" value="Trp_2_3_dOase"/>
</dbReference>
<dbReference type="PANTHER" id="PTHR10138">
    <property type="entry name" value="TRYPTOPHAN 2,3-DIOXYGENASE"/>
    <property type="match status" value="1"/>
</dbReference>
<dbReference type="PANTHER" id="PTHR10138:SF0">
    <property type="entry name" value="TRYPTOPHAN 2,3-DIOXYGENASE"/>
    <property type="match status" value="1"/>
</dbReference>
<dbReference type="Pfam" id="PF03301">
    <property type="entry name" value="Trp_dioxygenase"/>
    <property type="match status" value="1"/>
</dbReference>
<dbReference type="SUPFAM" id="SSF140959">
    <property type="entry name" value="Indolic compounds 2,3-dioxygenase-like"/>
    <property type="match status" value="1"/>
</dbReference>
<keyword id="KW-0223">Dioxygenase</keyword>
<keyword id="KW-0349">Heme</keyword>
<keyword id="KW-0408">Iron</keyword>
<keyword id="KW-0479">Metal-binding</keyword>
<keyword id="KW-0560">Oxidoreductase</keyword>
<keyword id="KW-0597">Phosphoprotein</keyword>
<keyword id="KW-1185">Reference proteome</keyword>
<keyword id="KW-0823">Tryptophan catabolism</keyword>
<organism>
    <name type="scientific">Rattus norvegicus</name>
    <name type="common">Rat</name>
    <dbReference type="NCBI Taxonomy" id="10116"/>
    <lineage>
        <taxon>Eukaryota</taxon>
        <taxon>Metazoa</taxon>
        <taxon>Chordata</taxon>
        <taxon>Craniata</taxon>
        <taxon>Vertebrata</taxon>
        <taxon>Euteleostomi</taxon>
        <taxon>Mammalia</taxon>
        <taxon>Eutheria</taxon>
        <taxon>Euarchontoglires</taxon>
        <taxon>Glires</taxon>
        <taxon>Rodentia</taxon>
        <taxon>Myomorpha</taxon>
        <taxon>Muroidea</taxon>
        <taxon>Muridae</taxon>
        <taxon>Murinae</taxon>
        <taxon>Rattus</taxon>
    </lineage>
</organism>
<protein>
    <recommendedName>
        <fullName evidence="1">Tryptophan 2,3-dioxygenase</fullName>
        <shortName evidence="1">TDO</shortName>
        <ecNumber evidence="1">1.13.11.11</ecNumber>
    </recommendedName>
    <alternativeName>
        <fullName evidence="1">Tryptamin 2,3-dioxygenase</fullName>
    </alternativeName>
    <alternativeName>
        <fullName evidence="1">Tryptophan oxygenase</fullName>
        <shortName evidence="1">TO</shortName>
        <shortName evidence="1">TRPO</shortName>
    </alternativeName>
    <alternativeName>
        <fullName evidence="1">Tryptophan pyrrolase</fullName>
    </alternativeName>
    <alternativeName>
        <fullName evidence="1">Tryptophanase</fullName>
    </alternativeName>
</protein>
<proteinExistence type="evidence at protein level"/>
<feature type="chain" id="PRO_0000072401" description="Tryptophan 2,3-dioxygenase">
    <location>
        <begin position="1"/>
        <end position="406"/>
    </location>
</feature>
<feature type="binding site" evidence="1">
    <location>
        <begin position="72"/>
        <end position="76"/>
    </location>
    <ligand>
        <name>substrate</name>
    </ligand>
</feature>
<feature type="binding site" evidence="1">
    <location>
        <position position="144"/>
    </location>
    <ligand>
        <name>substrate</name>
    </ligand>
</feature>
<feature type="binding site" description="axial binding residue" evidence="1">
    <location>
        <position position="328"/>
    </location>
    <ligand>
        <name>heme</name>
        <dbReference type="ChEBI" id="CHEBI:30413"/>
    </ligand>
    <ligandPart>
        <name>Fe</name>
        <dbReference type="ChEBI" id="CHEBI:18248"/>
    </ligandPart>
</feature>
<feature type="binding site" evidence="1">
    <location>
        <position position="342"/>
    </location>
    <ligand>
        <name>substrate</name>
    </ligand>
</feature>
<feature type="modified residue" description="Phosphoserine" evidence="4">
    <location>
        <position position="19"/>
    </location>
</feature>
<feature type="sequence conflict" description="In Ref. 5; X60833." evidence="3" ref="5">
    <location>
        <position position="207"/>
    </location>
</feature>
<evidence type="ECO:0000255" key="1">
    <source>
        <dbReference type="HAMAP-Rule" id="MF_03020"/>
    </source>
</evidence>
<evidence type="ECO:0000269" key="2">
    <source>
    </source>
</evidence>
<evidence type="ECO:0000305" key="3"/>
<evidence type="ECO:0007744" key="4">
    <source>
    </source>
</evidence>